<feature type="chain" id="PRO_0000139524" description="Nitrogenase iron protein">
    <location>
        <begin position="1"/>
        <end position="297"/>
    </location>
</feature>
<feature type="binding site" evidence="2">
    <location>
        <begin position="11"/>
        <end position="18"/>
    </location>
    <ligand>
        <name>ATP</name>
        <dbReference type="ChEBI" id="CHEBI:30616"/>
    </ligand>
</feature>
<feature type="binding site" evidence="1">
    <location>
        <position position="99"/>
    </location>
    <ligand>
        <name>[4Fe-4S] cluster</name>
        <dbReference type="ChEBI" id="CHEBI:49883"/>
        <note>ligand shared between dimeric partners</note>
    </ligand>
</feature>
<feature type="binding site" evidence="1">
    <location>
        <position position="133"/>
    </location>
    <ligand>
        <name>[4Fe-4S] cluster</name>
        <dbReference type="ChEBI" id="CHEBI:49883"/>
        <note>ligand shared between dimeric partners</note>
    </ligand>
</feature>
<feature type="modified residue" description="ADP-ribosylarginine; by dinitrogenase reductase ADP-ribosyltransferase" evidence="1">
    <location>
        <position position="102"/>
    </location>
</feature>
<feature type="sequence conflict" description="In Ref. 1; CAA24526." evidence="3" ref="1">
    <original>L</original>
    <variation>V</variation>
    <location>
        <position position="60"/>
    </location>
</feature>
<feature type="sequence conflict" description="In Ref. 1; CAA24526." evidence="3" ref="1">
    <original>Q</original>
    <variation>H</variation>
    <location>
        <position position="189"/>
    </location>
</feature>
<organism>
    <name type="scientific">Rhizobium meliloti (strain 1021)</name>
    <name type="common">Ensifer meliloti</name>
    <name type="synonym">Sinorhizobium meliloti</name>
    <dbReference type="NCBI Taxonomy" id="266834"/>
    <lineage>
        <taxon>Bacteria</taxon>
        <taxon>Pseudomonadati</taxon>
        <taxon>Pseudomonadota</taxon>
        <taxon>Alphaproteobacteria</taxon>
        <taxon>Hyphomicrobiales</taxon>
        <taxon>Rhizobiaceae</taxon>
        <taxon>Sinorhizobium/Ensifer group</taxon>
        <taxon>Sinorhizobium</taxon>
    </lineage>
</organism>
<sequence>MAALRQIAFYGKGGIGKSTTSQNTLAALVDLGQKILIVGCDPKADSTRLILNAKAQDTVLHLAATEGSVEDLELEDVLKVGYRGIKCVESGGPEPGVGCAGRGVITSINFLEENGAYNDVDYVSYDVLGDVVCGGFAMPIRENKAQEIYIVMSGEMMALYAANNIAKGILKYAHAGGVRLGGLICNERQTDRELDLAEALAARLNSKLIHFVPRDNIVQHAELRKMTVIQYAPNSKQAGEYRALAEKIHANSGRGTVPTPITMEELEDMLLDFGIMKSDEQMLAELHAKEAKVIAPH</sequence>
<name>NIFH_RHIME</name>
<gene>
    <name type="primary">nifH</name>
    <name type="ordered locus">RA0449</name>
    <name type="ORF">SMa0825</name>
</gene>
<evidence type="ECO:0000250" key="1"/>
<evidence type="ECO:0000255" key="2"/>
<evidence type="ECO:0000305" key="3"/>
<protein>
    <recommendedName>
        <fullName>Nitrogenase iron protein</fullName>
        <ecNumber>1.18.6.1</ecNumber>
    </recommendedName>
    <alternativeName>
        <fullName>Nitrogenase Fe protein</fullName>
    </alternativeName>
    <alternativeName>
        <fullName>Nitrogenase component II</fullName>
    </alternativeName>
    <alternativeName>
        <fullName>Nitrogenase reductase</fullName>
    </alternativeName>
</protein>
<accession>P00460</accession>
<keyword id="KW-0004">4Fe-4S</keyword>
<keyword id="KW-0013">ADP-ribosylation</keyword>
<keyword id="KW-0067">ATP-binding</keyword>
<keyword id="KW-0408">Iron</keyword>
<keyword id="KW-0411">Iron-sulfur</keyword>
<keyword id="KW-0479">Metal-binding</keyword>
<keyword id="KW-0535">Nitrogen fixation</keyword>
<keyword id="KW-0547">Nucleotide-binding</keyword>
<keyword id="KW-0560">Oxidoreductase</keyword>
<keyword id="KW-0614">Plasmid</keyword>
<keyword id="KW-1185">Reference proteome</keyword>
<dbReference type="EC" id="1.18.6.1"/>
<dbReference type="EMBL" id="V01215">
    <property type="protein sequence ID" value="CAA24526.1"/>
    <property type="molecule type" value="Genomic_DNA"/>
</dbReference>
<dbReference type="EMBL" id="AE006469">
    <property type="protein sequence ID" value="AAK65107.1"/>
    <property type="molecule type" value="Genomic_DNA"/>
</dbReference>
<dbReference type="EMBL" id="M24330">
    <property type="protein sequence ID" value="AAA26317.1"/>
    <property type="molecule type" value="Genomic_DNA"/>
</dbReference>
<dbReference type="PIR" id="A00537">
    <property type="entry name" value="NIZRFM"/>
</dbReference>
<dbReference type="PIR" id="A95318">
    <property type="entry name" value="A95318"/>
</dbReference>
<dbReference type="RefSeq" id="NP_435695.1">
    <property type="nucleotide sequence ID" value="NC_003037.1"/>
</dbReference>
<dbReference type="RefSeq" id="WP_003532770.1">
    <property type="nucleotide sequence ID" value="NC_003037.1"/>
</dbReference>
<dbReference type="SMR" id="P00460"/>
<dbReference type="EnsemblBacteria" id="AAK65107">
    <property type="protein sequence ID" value="AAK65107"/>
    <property type="gene ID" value="SMa0825"/>
</dbReference>
<dbReference type="GeneID" id="89573868"/>
<dbReference type="KEGG" id="sme:SMa0825"/>
<dbReference type="PATRIC" id="fig|266834.11.peg.462"/>
<dbReference type="HOGENOM" id="CLU_059373_0_0_5"/>
<dbReference type="OrthoDB" id="9778641at2"/>
<dbReference type="PRO" id="PR:P00460"/>
<dbReference type="Proteomes" id="UP000001976">
    <property type="component" value="Plasmid pSymA"/>
</dbReference>
<dbReference type="GO" id="GO:0051539">
    <property type="term" value="F:4 iron, 4 sulfur cluster binding"/>
    <property type="evidence" value="ECO:0007669"/>
    <property type="project" value="UniProtKB-KW"/>
</dbReference>
<dbReference type="GO" id="GO:0005524">
    <property type="term" value="F:ATP binding"/>
    <property type="evidence" value="ECO:0007669"/>
    <property type="project" value="UniProtKB-UniRule"/>
</dbReference>
<dbReference type="GO" id="GO:0046872">
    <property type="term" value="F:metal ion binding"/>
    <property type="evidence" value="ECO:0007669"/>
    <property type="project" value="UniProtKB-KW"/>
</dbReference>
<dbReference type="GO" id="GO:0016163">
    <property type="term" value="F:nitrogenase activity"/>
    <property type="evidence" value="ECO:0007669"/>
    <property type="project" value="UniProtKB-UniRule"/>
</dbReference>
<dbReference type="GO" id="GO:0009399">
    <property type="term" value="P:nitrogen fixation"/>
    <property type="evidence" value="ECO:0007669"/>
    <property type="project" value="UniProtKB-UniRule"/>
</dbReference>
<dbReference type="CDD" id="cd02040">
    <property type="entry name" value="NifH"/>
    <property type="match status" value="1"/>
</dbReference>
<dbReference type="FunFam" id="3.40.50.300:FF:001379">
    <property type="entry name" value="Nitrogenase iron protein 1"/>
    <property type="match status" value="1"/>
</dbReference>
<dbReference type="Gene3D" id="3.40.50.300">
    <property type="entry name" value="P-loop containing nucleotide triphosphate hydrolases"/>
    <property type="match status" value="1"/>
</dbReference>
<dbReference type="HAMAP" id="MF_00533">
    <property type="entry name" value="NifH"/>
    <property type="match status" value="1"/>
</dbReference>
<dbReference type="InterPro" id="IPR030655">
    <property type="entry name" value="NifH/chlL_CS"/>
</dbReference>
<dbReference type="InterPro" id="IPR000392">
    <property type="entry name" value="NifH/frxC"/>
</dbReference>
<dbReference type="InterPro" id="IPR005977">
    <property type="entry name" value="Nitrogenase_Fe_NifH"/>
</dbReference>
<dbReference type="InterPro" id="IPR027417">
    <property type="entry name" value="P-loop_NTPase"/>
</dbReference>
<dbReference type="NCBIfam" id="TIGR01287">
    <property type="entry name" value="nifH"/>
    <property type="match status" value="1"/>
</dbReference>
<dbReference type="PANTHER" id="PTHR42864">
    <property type="entry name" value="LIGHT-INDEPENDENT PROTOCHLOROPHYLLIDE REDUCTASE IRON-SULFUR ATP-BINDING PROTEIN"/>
    <property type="match status" value="1"/>
</dbReference>
<dbReference type="PANTHER" id="PTHR42864:SF2">
    <property type="entry name" value="LIGHT-INDEPENDENT PROTOCHLOROPHYLLIDE REDUCTASE IRON-SULFUR ATP-BINDING PROTEIN"/>
    <property type="match status" value="1"/>
</dbReference>
<dbReference type="Pfam" id="PF00142">
    <property type="entry name" value="Fer4_NifH"/>
    <property type="match status" value="1"/>
</dbReference>
<dbReference type="PIRSF" id="PIRSF000363">
    <property type="entry name" value="Nitrogenase_iron"/>
    <property type="match status" value="1"/>
</dbReference>
<dbReference type="PRINTS" id="PR00091">
    <property type="entry name" value="NITROGNASEII"/>
</dbReference>
<dbReference type="SUPFAM" id="SSF52540">
    <property type="entry name" value="P-loop containing nucleoside triphosphate hydrolases"/>
    <property type="match status" value="1"/>
</dbReference>
<dbReference type="PROSITE" id="PS00746">
    <property type="entry name" value="NIFH_FRXC_1"/>
    <property type="match status" value="1"/>
</dbReference>
<dbReference type="PROSITE" id="PS00692">
    <property type="entry name" value="NIFH_FRXC_2"/>
    <property type="match status" value="1"/>
</dbReference>
<dbReference type="PROSITE" id="PS51026">
    <property type="entry name" value="NIFH_FRXC_3"/>
    <property type="match status" value="1"/>
</dbReference>
<reference key="1">
    <citation type="journal article" date="1981" name="Nucleic Acids Res.">
        <title>Nucleotide sequence of the R.meliloti nitrogenase reductase (nifH) gene.</title>
        <authorList>
            <person name="Toeroek I."/>
            <person name="Kondorosi A."/>
        </authorList>
    </citation>
    <scope>NUCLEOTIDE SEQUENCE [GENOMIC DNA]</scope>
</reference>
<reference key="2">
    <citation type="journal article" date="2001" name="Proc. Natl. Acad. Sci. U.S.A.">
        <title>Nucleotide sequence and predicted functions of the entire Sinorhizobium meliloti pSymA megaplasmid.</title>
        <authorList>
            <person name="Barnett M.J."/>
            <person name="Fisher R.F."/>
            <person name="Jones T."/>
            <person name="Komp C."/>
            <person name="Abola A.P."/>
            <person name="Barloy-Hubler F."/>
            <person name="Bowser L."/>
            <person name="Capela D."/>
            <person name="Galibert F."/>
            <person name="Gouzy J."/>
            <person name="Gurjal M."/>
            <person name="Hong A."/>
            <person name="Huizar L."/>
            <person name="Hyman R.W."/>
            <person name="Kahn D."/>
            <person name="Kahn M.L."/>
            <person name="Kalman S."/>
            <person name="Keating D.H."/>
            <person name="Palm C."/>
            <person name="Peck M.C."/>
            <person name="Surzycki R."/>
            <person name="Wells D.H."/>
            <person name="Yeh K.-C."/>
            <person name="Davis R.W."/>
            <person name="Federspiel N.A."/>
            <person name="Long S.R."/>
        </authorList>
    </citation>
    <scope>NUCLEOTIDE SEQUENCE [LARGE SCALE GENOMIC DNA]</scope>
    <source>
        <strain>1021</strain>
    </source>
</reference>
<reference key="3">
    <citation type="journal article" date="2001" name="Science">
        <title>The composite genome of the legume symbiont Sinorhizobium meliloti.</title>
        <authorList>
            <person name="Galibert F."/>
            <person name="Finan T.M."/>
            <person name="Long S.R."/>
            <person name="Puehler A."/>
            <person name="Abola P."/>
            <person name="Ampe F."/>
            <person name="Barloy-Hubler F."/>
            <person name="Barnett M.J."/>
            <person name="Becker A."/>
            <person name="Boistard P."/>
            <person name="Bothe G."/>
            <person name="Boutry M."/>
            <person name="Bowser L."/>
            <person name="Buhrmester J."/>
            <person name="Cadieu E."/>
            <person name="Capela D."/>
            <person name="Chain P."/>
            <person name="Cowie A."/>
            <person name="Davis R.W."/>
            <person name="Dreano S."/>
            <person name="Federspiel N.A."/>
            <person name="Fisher R.F."/>
            <person name="Gloux S."/>
            <person name="Godrie T."/>
            <person name="Goffeau A."/>
            <person name="Golding B."/>
            <person name="Gouzy J."/>
            <person name="Gurjal M."/>
            <person name="Hernandez-Lucas I."/>
            <person name="Hong A."/>
            <person name="Huizar L."/>
            <person name="Hyman R.W."/>
            <person name="Jones T."/>
            <person name="Kahn D."/>
            <person name="Kahn M.L."/>
            <person name="Kalman S."/>
            <person name="Keating D.H."/>
            <person name="Kiss E."/>
            <person name="Komp C."/>
            <person name="Lelaure V."/>
            <person name="Masuy D."/>
            <person name="Palm C."/>
            <person name="Peck M.C."/>
            <person name="Pohl T.M."/>
            <person name="Portetelle D."/>
            <person name="Purnelle B."/>
            <person name="Ramsperger U."/>
            <person name="Surzycki R."/>
            <person name="Thebault P."/>
            <person name="Vandenbol M."/>
            <person name="Vorhoelter F.J."/>
            <person name="Weidner S."/>
            <person name="Wells D.H."/>
            <person name="Wong K."/>
            <person name="Yeh K.-C."/>
            <person name="Batut J."/>
        </authorList>
    </citation>
    <scope>NUCLEOTIDE SEQUENCE [LARGE SCALE GENOMIC DNA]</scope>
    <source>
        <strain>1021</strain>
    </source>
</reference>
<reference key="4">
    <citation type="journal article" date="1982" name="Cell">
        <title>Directed transposon Tn5 mutagenesis and complementation analysis of Rhizobium meliloti symbiotic nitrogen fixation genes.</title>
        <authorList>
            <person name="Ruvkun G.B."/>
            <person name="Sundaresan V."/>
            <person name="Ausubel F.M."/>
        </authorList>
    </citation>
    <scope>NUCLEOTIDE SEQUENCE [GENOMIC DNA] OF 37-53</scope>
</reference>
<comment type="function">
    <text evidence="1">The key enzymatic reactions in nitrogen fixation are catalyzed by the nitrogenase complex, which has 2 components: the iron protein and the molybdenum-iron protein.</text>
</comment>
<comment type="catalytic activity">
    <reaction>
        <text>N2 + 8 reduced [2Fe-2S]-[ferredoxin] + 16 ATP + 16 H2O = H2 + 8 oxidized [2Fe-2S]-[ferredoxin] + 2 NH4(+) + 16 ADP + 16 phosphate + 6 H(+)</text>
        <dbReference type="Rhea" id="RHEA:21448"/>
        <dbReference type="Rhea" id="RHEA-COMP:10000"/>
        <dbReference type="Rhea" id="RHEA-COMP:10001"/>
        <dbReference type="ChEBI" id="CHEBI:15377"/>
        <dbReference type="ChEBI" id="CHEBI:15378"/>
        <dbReference type="ChEBI" id="CHEBI:17997"/>
        <dbReference type="ChEBI" id="CHEBI:18276"/>
        <dbReference type="ChEBI" id="CHEBI:28938"/>
        <dbReference type="ChEBI" id="CHEBI:30616"/>
        <dbReference type="ChEBI" id="CHEBI:33737"/>
        <dbReference type="ChEBI" id="CHEBI:33738"/>
        <dbReference type="ChEBI" id="CHEBI:43474"/>
        <dbReference type="ChEBI" id="CHEBI:456216"/>
        <dbReference type="EC" id="1.18.6.1"/>
    </reaction>
</comment>
<comment type="cofactor">
    <cofactor evidence="1">
        <name>[4Fe-4S] cluster</name>
        <dbReference type="ChEBI" id="CHEBI:49883"/>
    </cofactor>
    <text evidence="1">Binds 1 [4Fe-4S] cluster per dimer.</text>
</comment>
<comment type="subunit">
    <text evidence="1">Homodimer.</text>
</comment>
<comment type="PTM">
    <text evidence="1">The reversible ADP-ribosylation of Arg-102 inactivates the nitrogenase reductase and regulates nitrogenase activity.</text>
</comment>
<comment type="similarity">
    <text evidence="3">Belongs to the NifH/BchL/ChlL family.</text>
</comment>
<geneLocation type="plasmid">
    <name>pSymA</name>
    <name>megaplasmid 1</name>
</geneLocation>
<proteinExistence type="inferred from homology"/>